<accession>Q9KSW1</accession>
<reference key="1">
    <citation type="journal article" date="2000" name="Nature">
        <title>DNA sequence of both chromosomes of the cholera pathogen Vibrio cholerae.</title>
        <authorList>
            <person name="Heidelberg J.F."/>
            <person name="Eisen J.A."/>
            <person name="Nelson W.C."/>
            <person name="Clayton R.A."/>
            <person name="Gwinn M.L."/>
            <person name="Dodson R.J."/>
            <person name="Haft D.H."/>
            <person name="Hickey E.K."/>
            <person name="Peterson J.D."/>
            <person name="Umayam L.A."/>
            <person name="Gill S.R."/>
            <person name="Nelson K.E."/>
            <person name="Read T.D."/>
            <person name="Tettelin H."/>
            <person name="Richardson D.L."/>
            <person name="Ermolaeva M.D."/>
            <person name="Vamathevan J.J."/>
            <person name="Bass S."/>
            <person name="Qin H."/>
            <person name="Dragoi I."/>
            <person name="Sellers P."/>
            <person name="McDonald L.A."/>
            <person name="Utterback T.R."/>
            <person name="Fleischmann R.D."/>
            <person name="Nierman W.C."/>
            <person name="White O."/>
            <person name="Salzberg S.L."/>
            <person name="Smith H.O."/>
            <person name="Colwell R.R."/>
            <person name="Mekalanos J.J."/>
            <person name="Venter J.C."/>
            <person name="Fraser C.M."/>
        </authorList>
    </citation>
    <scope>NUCLEOTIDE SEQUENCE [LARGE SCALE GENOMIC DNA]</scope>
    <source>
        <strain>ATCC 39315 / El Tor Inaba N16961</strain>
    </source>
</reference>
<protein>
    <recommendedName>
        <fullName evidence="1">Putative transport protein VC_1145</fullName>
    </recommendedName>
</protein>
<feature type="chain" id="PRO_0000208791" description="Putative transport protein VC_1145">
    <location>
        <begin position="1"/>
        <end position="558"/>
    </location>
</feature>
<feature type="transmembrane region" description="Helical" evidence="1">
    <location>
        <begin position="5"/>
        <end position="25"/>
    </location>
</feature>
<feature type="transmembrane region" description="Helical" evidence="1">
    <location>
        <begin position="37"/>
        <end position="57"/>
    </location>
</feature>
<feature type="transmembrane region" description="Helical" evidence="1">
    <location>
        <begin position="66"/>
        <end position="86"/>
    </location>
</feature>
<feature type="transmembrane region" description="Helical" evidence="1">
    <location>
        <begin position="92"/>
        <end position="112"/>
    </location>
</feature>
<feature type="transmembrane region" description="Helical" evidence="1">
    <location>
        <begin position="164"/>
        <end position="184"/>
    </location>
</feature>
<feature type="transmembrane region" description="Helical" evidence="1">
    <location>
        <begin position="384"/>
        <end position="404"/>
    </location>
</feature>
<feature type="transmembrane region" description="Helical" evidence="1">
    <location>
        <begin position="407"/>
        <end position="427"/>
    </location>
</feature>
<feature type="transmembrane region" description="Helical" evidence="1">
    <location>
        <begin position="441"/>
        <end position="461"/>
    </location>
</feature>
<feature type="transmembrane region" description="Helical" evidence="1">
    <location>
        <begin position="476"/>
        <end position="496"/>
    </location>
</feature>
<feature type="transmembrane region" description="Helical" evidence="1">
    <location>
        <begin position="504"/>
        <end position="524"/>
    </location>
</feature>
<feature type="transmembrane region" description="Helical" evidence="1">
    <location>
        <begin position="537"/>
        <end position="557"/>
    </location>
</feature>
<feature type="domain" description="RCK C-terminal 1" evidence="1">
    <location>
        <begin position="203"/>
        <end position="290"/>
    </location>
</feature>
<feature type="domain" description="RCK C-terminal 2" evidence="1">
    <location>
        <begin position="291"/>
        <end position="374"/>
    </location>
</feature>
<name>Y1145_VIBCH</name>
<evidence type="ECO:0000255" key="1">
    <source>
        <dbReference type="HAMAP-Rule" id="MF_01015"/>
    </source>
</evidence>
<organism>
    <name type="scientific">Vibrio cholerae serotype O1 (strain ATCC 39315 / El Tor Inaba N16961)</name>
    <dbReference type="NCBI Taxonomy" id="243277"/>
    <lineage>
        <taxon>Bacteria</taxon>
        <taxon>Pseudomonadati</taxon>
        <taxon>Pseudomonadota</taxon>
        <taxon>Gammaproteobacteria</taxon>
        <taxon>Vibrionales</taxon>
        <taxon>Vibrionaceae</taxon>
        <taxon>Vibrio</taxon>
    </lineage>
</organism>
<sequence length="558" mass="60503">MNIDVVLLLEQNPILLIFVVLAIGLSFGKIRFGSFQLGNSIGVLITSLIMGHLGFSFTPEALTIGFMLFIYCVGIEAGPNFFGIFFRDGKHYLILSLVVLITATWIAYFGGYYLNLDYGLAAGMMAGALTSTPVLVGAQDALNSGLAAVPRHMDLSLILDNVSVGYAMAYLIGLISMIMFAKLLPKLQKQNLSDSAQQIAQERGLGSQRKVYLPIIRAYRVGPELINWIDGRNLRELGIYRQTGCYIERIRRHGILAHPDGDAILQEGDEIALVGFPDSHARLDPSFRNGKEVFDRNLLDLRISEEEIVVKSDSIAGKRLSDLNLSEYGCFLNRVVRAQIEMPMDLDIVLAKGDVLQVSGEKSKVKGLADKIGFISVHSQMADLLAFCSFFILGILFGLVTMTFGQVSFSLGNAVGLLLSGITLGFLRANHPTFGYVPQGALNMVKDLGLAIFMVGIGLNAGSKMFQHLSEVGVQVIGLAFLVSVVPVVFAYLVGAYILKMNRALLFGAIIGARTCAPAMDVVNEYAKSTIPALGYAGTYAIANILMTLTGTIFILLS</sequence>
<dbReference type="EMBL" id="AE003852">
    <property type="protein sequence ID" value="AAF94304.1"/>
    <property type="molecule type" value="Genomic_DNA"/>
</dbReference>
<dbReference type="PIR" id="F82236">
    <property type="entry name" value="F82236"/>
</dbReference>
<dbReference type="RefSeq" id="NP_230790.1">
    <property type="nucleotide sequence ID" value="NC_002505.1"/>
</dbReference>
<dbReference type="RefSeq" id="WP_001018084.1">
    <property type="nucleotide sequence ID" value="NZ_LT906614.1"/>
</dbReference>
<dbReference type="SMR" id="Q9KSW1"/>
<dbReference type="STRING" id="243277.VC_1145"/>
<dbReference type="DNASU" id="2614578"/>
<dbReference type="EnsemblBacteria" id="AAF94304">
    <property type="protein sequence ID" value="AAF94304"/>
    <property type="gene ID" value="VC_1145"/>
</dbReference>
<dbReference type="KEGG" id="vch:VC_1145"/>
<dbReference type="PATRIC" id="fig|243277.26.peg.1094"/>
<dbReference type="eggNOG" id="COG2985">
    <property type="taxonomic scope" value="Bacteria"/>
</dbReference>
<dbReference type="eggNOG" id="COG3273">
    <property type="taxonomic scope" value="Bacteria"/>
</dbReference>
<dbReference type="HOGENOM" id="CLU_035023_2_2_6"/>
<dbReference type="Proteomes" id="UP000000584">
    <property type="component" value="Chromosome 1"/>
</dbReference>
<dbReference type="GO" id="GO:0005886">
    <property type="term" value="C:plasma membrane"/>
    <property type="evidence" value="ECO:0000318"/>
    <property type="project" value="GO_Central"/>
</dbReference>
<dbReference type="GO" id="GO:0008324">
    <property type="term" value="F:monoatomic cation transmembrane transporter activity"/>
    <property type="evidence" value="ECO:0007669"/>
    <property type="project" value="InterPro"/>
</dbReference>
<dbReference type="GO" id="GO:0006813">
    <property type="term" value="P:potassium ion transport"/>
    <property type="evidence" value="ECO:0007669"/>
    <property type="project" value="InterPro"/>
</dbReference>
<dbReference type="Gene3D" id="3.30.70.1450">
    <property type="entry name" value="Regulator of K+ conductance, C-terminal domain"/>
    <property type="match status" value="2"/>
</dbReference>
<dbReference type="HAMAP" id="MF_01015">
    <property type="entry name" value="YbjL"/>
    <property type="match status" value="1"/>
</dbReference>
<dbReference type="InterPro" id="IPR050144">
    <property type="entry name" value="AAE_transporter"/>
</dbReference>
<dbReference type="InterPro" id="IPR006037">
    <property type="entry name" value="RCK_C"/>
</dbReference>
<dbReference type="InterPro" id="IPR036721">
    <property type="entry name" value="RCK_C_sf"/>
</dbReference>
<dbReference type="InterPro" id="IPR023017">
    <property type="entry name" value="Transp_YbjL_put"/>
</dbReference>
<dbReference type="InterPro" id="IPR006512">
    <property type="entry name" value="YidE_YbjL"/>
</dbReference>
<dbReference type="NCBIfam" id="NF003440">
    <property type="entry name" value="PRK04972.1"/>
    <property type="match status" value="1"/>
</dbReference>
<dbReference type="NCBIfam" id="TIGR01625">
    <property type="entry name" value="YidE_YbjL_dupl"/>
    <property type="match status" value="2"/>
</dbReference>
<dbReference type="PANTHER" id="PTHR30445">
    <property type="entry name" value="K(+)_H(+) ANTIPORTER SUBUNIT KHTT"/>
    <property type="match status" value="1"/>
</dbReference>
<dbReference type="PANTHER" id="PTHR30445:SF10">
    <property type="entry name" value="TRANSPORT PROTEIN YBJL-RELATED"/>
    <property type="match status" value="1"/>
</dbReference>
<dbReference type="Pfam" id="PF06826">
    <property type="entry name" value="Asp-Al_Ex"/>
    <property type="match status" value="2"/>
</dbReference>
<dbReference type="Pfam" id="PF02080">
    <property type="entry name" value="TrkA_C"/>
    <property type="match status" value="2"/>
</dbReference>
<dbReference type="SUPFAM" id="SSF116726">
    <property type="entry name" value="TrkA C-terminal domain-like"/>
    <property type="match status" value="2"/>
</dbReference>
<dbReference type="PROSITE" id="PS51202">
    <property type="entry name" value="RCK_C"/>
    <property type="match status" value="2"/>
</dbReference>
<keyword id="KW-1003">Cell membrane</keyword>
<keyword id="KW-0472">Membrane</keyword>
<keyword id="KW-1185">Reference proteome</keyword>
<keyword id="KW-0677">Repeat</keyword>
<keyword id="KW-0812">Transmembrane</keyword>
<keyword id="KW-1133">Transmembrane helix</keyword>
<keyword id="KW-0813">Transport</keyword>
<proteinExistence type="inferred from homology"/>
<gene>
    <name type="ordered locus">VC_1145</name>
</gene>
<comment type="subcellular location">
    <subcellularLocation>
        <location evidence="1">Cell membrane</location>
        <topology evidence="1">Multi-pass membrane protein</topology>
    </subcellularLocation>
</comment>
<comment type="similarity">
    <text evidence="1">Belongs to the AAE transporter (TC 2.A.81) family. YbjL subfamily.</text>
</comment>